<accession>B7LV39</accession>
<proteinExistence type="evidence at transcript level"/>
<feature type="chain" id="PRO_1000145655" description="Multidrug resistance protein MdtB">
    <location>
        <begin position="1"/>
        <end position="1040"/>
    </location>
</feature>
<feature type="transmembrane region" description="Helical" evidence="1">
    <location>
        <begin position="16"/>
        <end position="36"/>
    </location>
</feature>
<feature type="transmembrane region" description="Helical" evidence="1">
    <location>
        <begin position="347"/>
        <end position="367"/>
    </location>
</feature>
<feature type="transmembrane region" description="Helical" evidence="1">
    <location>
        <begin position="369"/>
        <end position="389"/>
    </location>
</feature>
<feature type="transmembrane region" description="Helical" evidence="1">
    <location>
        <begin position="396"/>
        <end position="416"/>
    </location>
</feature>
<feature type="transmembrane region" description="Helical" evidence="1">
    <location>
        <begin position="440"/>
        <end position="460"/>
    </location>
</feature>
<feature type="transmembrane region" description="Helical" evidence="1">
    <location>
        <begin position="472"/>
        <end position="492"/>
    </location>
</feature>
<feature type="transmembrane region" description="Helical" evidence="1">
    <location>
        <begin position="537"/>
        <end position="557"/>
    </location>
</feature>
<feature type="transmembrane region" description="Helical" evidence="1">
    <location>
        <begin position="863"/>
        <end position="883"/>
    </location>
</feature>
<feature type="transmembrane region" description="Helical" evidence="1">
    <location>
        <begin position="888"/>
        <end position="908"/>
    </location>
</feature>
<feature type="transmembrane region" description="Helical" evidence="1">
    <location>
        <begin position="911"/>
        <end position="931"/>
    </location>
</feature>
<feature type="transmembrane region" description="Helical" evidence="1">
    <location>
        <begin position="968"/>
        <end position="988"/>
    </location>
</feature>
<feature type="transmembrane region" description="Helical" evidence="1">
    <location>
        <begin position="998"/>
        <end position="1018"/>
    </location>
</feature>
<keyword id="KW-0997">Cell inner membrane</keyword>
<keyword id="KW-1003">Cell membrane</keyword>
<keyword id="KW-0472">Membrane</keyword>
<keyword id="KW-0812">Transmembrane</keyword>
<keyword id="KW-1133">Transmembrane helix</keyword>
<keyword id="KW-0813">Transport</keyword>
<gene>
    <name evidence="1" type="primary">mdtB</name>
    <name type="ordered locus">EFER_2162</name>
</gene>
<dbReference type="EMBL" id="CU928158">
    <property type="protein sequence ID" value="CAQ89665.1"/>
    <property type="molecule type" value="Genomic_DNA"/>
</dbReference>
<dbReference type="RefSeq" id="WP_001197909.1">
    <property type="nucleotide sequence ID" value="NC_011740.1"/>
</dbReference>
<dbReference type="SMR" id="B7LV39"/>
<dbReference type="GeneID" id="75056802"/>
<dbReference type="KEGG" id="efe:EFER_2162"/>
<dbReference type="HOGENOM" id="CLU_002755_1_2_6"/>
<dbReference type="OrthoDB" id="9757904at2"/>
<dbReference type="Proteomes" id="UP000000745">
    <property type="component" value="Chromosome"/>
</dbReference>
<dbReference type="GO" id="GO:0005886">
    <property type="term" value="C:plasma membrane"/>
    <property type="evidence" value="ECO:0007669"/>
    <property type="project" value="UniProtKB-SubCell"/>
</dbReference>
<dbReference type="GO" id="GO:0042910">
    <property type="term" value="F:xenobiotic transmembrane transporter activity"/>
    <property type="evidence" value="ECO:0007669"/>
    <property type="project" value="TreeGrafter"/>
</dbReference>
<dbReference type="FunFam" id="1.20.1640.10:FF:000001">
    <property type="entry name" value="Efflux pump membrane transporter"/>
    <property type="match status" value="1"/>
</dbReference>
<dbReference type="FunFam" id="3.30.70.1430:FF:000001">
    <property type="entry name" value="Efflux pump membrane transporter"/>
    <property type="match status" value="1"/>
</dbReference>
<dbReference type="FunFam" id="3.30.2090.10:FF:000003">
    <property type="entry name" value="Multidrug resistance protein MdtB"/>
    <property type="match status" value="1"/>
</dbReference>
<dbReference type="FunFam" id="3.30.2090.10:FF:000006">
    <property type="entry name" value="Multidrug resistance protein MdtB"/>
    <property type="match status" value="1"/>
</dbReference>
<dbReference type="Gene3D" id="3.30.70.1430">
    <property type="entry name" value="Multidrug efflux transporter AcrB pore domain"/>
    <property type="match status" value="2"/>
</dbReference>
<dbReference type="Gene3D" id="3.30.70.1440">
    <property type="entry name" value="Multidrug efflux transporter AcrB pore domain"/>
    <property type="match status" value="1"/>
</dbReference>
<dbReference type="Gene3D" id="3.30.70.1320">
    <property type="entry name" value="Multidrug efflux transporter AcrB pore domain like"/>
    <property type="match status" value="1"/>
</dbReference>
<dbReference type="Gene3D" id="3.30.2090.10">
    <property type="entry name" value="Multidrug efflux transporter AcrB TolC docking domain, DN and DC subdomains"/>
    <property type="match status" value="2"/>
</dbReference>
<dbReference type="Gene3D" id="1.20.1640.10">
    <property type="entry name" value="Multidrug efflux transporter AcrB transmembrane domain"/>
    <property type="match status" value="2"/>
</dbReference>
<dbReference type="HAMAP" id="MF_01423">
    <property type="entry name" value="MdtB"/>
    <property type="match status" value="1"/>
</dbReference>
<dbReference type="InterPro" id="IPR027463">
    <property type="entry name" value="AcrB_DN_DC_subdom"/>
</dbReference>
<dbReference type="InterPro" id="IPR001036">
    <property type="entry name" value="Acrflvin-R"/>
</dbReference>
<dbReference type="InterPro" id="IPR022831">
    <property type="entry name" value="Multidrug-R_MdtB"/>
</dbReference>
<dbReference type="NCBIfam" id="NF007798">
    <property type="entry name" value="PRK10503.1"/>
    <property type="match status" value="1"/>
</dbReference>
<dbReference type="NCBIfam" id="NF033617">
    <property type="entry name" value="RND_permease_2"/>
    <property type="match status" value="1"/>
</dbReference>
<dbReference type="PANTHER" id="PTHR32063">
    <property type="match status" value="1"/>
</dbReference>
<dbReference type="PANTHER" id="PTHR32063:SF21">
    <property type="entry name" value="MULTIDRUG RESISTANCE PROTEIN MDTB"/>
    <property type="match status" value="1"/>
</dbReference>
<dbReference type="Pfam" id="PF00873">
    <property type="entry name" value="ACR_tran"/>
    <property type="match status" value="1"/>
</dbReference>
<dbReference type="PRINTS" id="PR00702">
    <property type="entry name" value="ACRIFLAVINRP"/>
</dbReference>
<dbReference type="SUPFAM" id="SSF82693">
    <property type="entry name" value="Multidrug efflux transporter AcrB pore domain, PN1, PN2, PC1 and PC2 subdomains"/>
    <property type="match status" value="3"/>
</dbReference>
<dbReference type="SUPFAM" id="SSF82714">
    <property type="entry name" value="Multidrug efflux transporter AcrB TolC docking domain, DN and DC subdomains"/>
    <property type="match status" value="2"/>
</dbReference>
<dbReference type="SUPFAM" id="SSF82866">
    <property type="entry name" value="Multidrug efflux transporter AcrB transmembrane domain"/>
    <property type="match status" value="2"/>
</dbReference>
<organism>
    <name type="scientific">Escherichia fergusonii (strain ATCC 35469 / DSM 13698 / CCUG 18766 / IAM 14443 / JCM 21226 / LMG 7866 / NBRC 102419 / NCTC 12128 / CDC 0568-73)</name>
    <dbReference type="NCBI Taxonomy" id="585054"/>
    <lineage>
        <taxon>Bacteria</taxon>
        <taxon>Pseudomonadati</taxon>
        <taxon>Pseudomonadota</taxon>
        <taxon>Gammaproteobacteria</taxon>
        <taxon>Enterobacterales</taxon>
        <taxon>Enterobacteriaceae</taxon>
        <taxon>Escherichia</taxon>
    </lineage>
</organism>
<name>MDTB_ESCF3</name>
<sequence>MQVLPPSSTGGPSRLFIMRPVATTLLMVAILLAGIIGYRALPVSALPEVDYPTIQVVTLYPGASPDVMTSAVTAPLERQFGQMSGLKQMSSQSSGGASVITLQFQLTLPLDVAEQEVQAAINAATNLLPSDLPNPPVYSKVNPADPPIMTLAVTSTAMPMTQVEDMVETRVAQKISQISGVGLVTLSGGQRPAVRVKLNAQAIAALGLTSETVRTAITGANVNSAKGSLDGPSRAVTLSANDQMQSAEEYRQLIIAYQNGAPIRLGDVATVEQGAENSWLGAWANKEQAIVMNVQRQPGANIISTADSIRQMLPQLTESLPKSVKVTVLSDRTTNIRASVNDTQFELMMAIALVVMIIYLFLRNIPATIIPGVAVPLSLIGTFAVMVFLDFSINNLTLMALTIATGFVVDDAIVVIENISRYIEKGEKPLAAALKGAGEIGFTIISLTFSLIAVLIPLLFMGDIVGRLFREFAITLAVAILISAVVSLTLTPMMCARMLSQESLRKQNRFSRASEKMFDRIIAAYGRGLAKVLNHPWLTLSVALSTLLLSVLLWVFIPKGFFPVQDNGIIQGTLQAPQSSSFANMAQRQRQVADVILQDPAVQSLTSFVGVDGTNPSLNSARLQINLKPLDERDDRVQKVIARLQTAVDKVPGVDLFLQPTQDLTIDTQVSRTQYQFTLQATSLDALSTWVPQLVEKLQQLPQLSDVSSDWQDQGLVAYVNVDRDSASRLGISMADVDNALYNAFGQRLISTIYTQANQYRVVLEHNTENTPGLAALDTIRLTSSDGGVVPLSSIAKIEQRFAPLSINHLDQFPVTTISFNMPDNYSLGDAVQAIMDTEKTLNLPVDITTQFQGSTLAFQSALGSTVWLIVAAVVAMYIVLGILYESFIHPITILSTLPTAGVGALLALLIAGSELDVIAIIGIILLIGIVKKNAIMMIDFALAAEREQGMSPRDAIYQACLLRFRPILMTTLAALLGALPLMLSTGVGAELRRPLGIGMVGGLVVSQVLTLFTTPVIYLLFDRLALWTKSRFARHEEEA</sequence>
<protein>
    <recommendedName>
        <fullName evidence="1">Multidrug resistance protein MdtB</fullName>
    </recommendedName>
    <alternativeName>
        <fullName evidence="1">Multidrug transporter MdtB</fullName>
    </alternativeName>
</protein>
<reference key="1">
    <citation type="journal article" date="2009" name="PLoS Genet.">
        <title>Organised genome dynamics in the Escherichia coli species results in highly diverse adaptive paths.</title>
        <authorList>
            <person name="Touchon M."/>
            <person name="Hoede C."/>
            <person name="Tenaillon O."/>
            <person name="Barbe V."/>
            <person name="Baeriswyl S."/>
            <person name="Bidet P."/>
            <person name="Bingen E."/>
            <person name="Bonacorsi S."/>
            <person name="Bouchier C."/>
            <person name="Bouvet O."/>
            <person name="Calteau A."/>
            <person name="Chiapello H."/>
            <person name="Clermont O."/>
            <person name="Cruveiller S."/>
            <person name="Danchin A."/>
            <person name="Diard M."/>
            <person name="Dossat C."/>
            <person name="Karoui M.E."/>
            <person name="Frapy E."/>
            <person name="Garry L."/>
            <person name="Ghigo J.M."/>
            <person name="Gilles A.M."/>
            <person name="Johnson J."/>
            <person name="Le Bouguenec C."/>
            <person name="Lescat M."/>
            <person name="Mangenot S."/>
            <person name="Martinez-Jehanne V."/>
            <person name="Matic I."/>
            <person name="Nassif X."/>
            <person name="Oztas S."/>
            <person name="Petit M.A."/>
            <person name="Pichon C."/>
            <person name="Rouy Z."/>
            <person name="Ruf C.S."/>
            <person name="Schneider D."/>
            <person name="Tourret J."/>
            <person name="Vacherie B."/>
            <person name="Vallenet D."/>
            <person name="Medigue C."/>
            <person name="Rocha E.P.C."/>
            <person name="Denamur E."/>
        </authorList>
    </citation>
    <scope>NUCLEOTIDE SEQUENCE [LARGE SCALE GENOMIC DNA]</scope>
    <source>
        <strain>ATCC 35469 / DSM 13698 / BCRC 15582 / CCUG 18766 / IAM 14443 / JCM 21226 / LMG 7866 / NBRC 102419 / NCTC 12128 / CDC 0568-73</strain>
    </source>
</reference>
<evidence type="ECO:0000255" key="1">
    <source>
        <dbReference type="HAMAP-Rule" id="MF_01423"/>
    </source>
</evidence>
<comment type="function">
    <text evidence="1">The MdtABC tripartite complex confers resistance against novobiocin and deoxycholate.</text>
</comment>
<comment type="subunit">
    <text evidence="1">Part of a tripartite efflux system composed of MdtA, MdtB and MdtC. MdtB forms a heteromultimer with MdtC.</text>
</comment>
<comment type="subcellular location">
    <subcellularLocation>
        <location evidence="1">Cell inner membrane</location>
        <topology evidence="1">Multi-pass membrane protein</topology>
    </subcellularLocation>
</comment>
<comment type="induction">
    <text>The mdtABC operon is transcriptionally activated by BaeR.</text>
</comment>
<comment type="similarity">
    <text evidence="1">Belongs to the resistance-nodulation-cell division (RND) (TC 2.A.6) family. MdtB subfamily.</text>
</comment>